<feature type="chain" id="PRO_0000099282" description="A-type inclusion protein A25 homolog">
    <location>
        <begin position="1"/>
        <end position="726"/>
    </location>
</feature>
<feature type="repeat" description="1">
    <location>
        <begin position="612"/>
        <end position="634"/>
    </location>
</feature>
<feature type="repeat" description="2">
    <location>
        <begin position="639"/>
        <end position="661"/>
    </location>
</feature>
<feature type="repeat" description="3">
    <location>
        <begin position="667"/>
        <end position="689"/>
    </location>
</feature>
<feature type="repeat" description="4">
    <location>
        <begin position="691"/>
        <end position="713"/>
    </location>
</feature>
<feature type="region of interest" description="Disordered" evidence="2">
    <location>
        <begin position="342"/>
        <end position="361"/>
    </location>
</feature>
<feature type="region of interest" description="4 X approximate tandem repeats">
    <location>
        <begin position="426"/>
        <end position="713"/>
    </location>
</feature>
<feature type="compositionally biased region" description="Basic and acidic residues" evidence="2">
    <location>
        <begin position="347"/>
        <end position="360"/>
    </location>
</feature>
<comment type="function">
    <text evidence="1">Structural protein that forms a matrix surrounding the mature virion (MV) through interaction with protein A26. Presence of protein A25 in the virion structurally prevents direct virus-cell fusion mechanism (By similarity).</text>
</comment>
<comment type="subunit">
    <text evidence="1">Interacts (via N-terminus) with protein A26.</text>
</comment>
<comment type="subcellular location">
    <subcellularLocation>
        <location>Virion</location>
    </subcellularLocation>
    <text evidence="1">Present above the membrane of mature virions (MV).</text>
</comment>
<comment type="miscellaneous">
    <text>Some orthopoxviruses such as cowpox, ectromelia, and raccoonpox viruses, form large cytoplasmic inclusions within which mature virions are embedded by a process called occlusion. In those viruses, A26 bridges mature virion with inclusion bodies through interactions with proteins A25 and A27 on the mature virion membrane. In camelpox virus, the protein A25 is deleted in its C-terminal region and no inclusion body is observed.</text>
</comment>
<comment type="similarity">
    <text evidence="3">Belongs to the poxviridae A25 protein family.</text>
</comment>
<gene>
    <name type="ordered locus">CMLV144</name>
</gene>
<protein>
    <recommendedName>
        <fullName>A-type inclusion protein A25 homolog</fullName>
        <shortName>ATI</shortName>
    </recommendedName>
</protein>
<name>ATI_CAMPM</name>
<evidence type="ECO:0000250" key="1"/>
<evidence type="ECO:0000256" key="2">
    <source>
        <dbReference type="SAM" id="MobiDB-lite"/>
    </source>
</evidence>
<evidence type="ECO:0000305" key="3"/>
<organismHost>
    <name type="scientific">Camelus</name>
    <dbReference type="NCBI Taxonomy" id="9836"/>
</organismHost>
<keyword id="KW-0426">Late protein</keyword>
<keyword id="KW-0677">Repeat</keyword>
<keyword id="KW-0946">Virion</keyword>
<proteinExistence type="inferred from homology"/>
<accession>Q8V2M9</accession>
<dbReference type="EMBL" id="AF438165">
    <property type="protein sequence ID" value="AAL73851.1"/>
    <property type="molecule type" value="Genomic_DNA"/>
</dbReference>
<dbReference type="RefSeq" id="NP_570534.1">
    <property type="nucleotide sequence ID" value="NC_003391.1"/>
</dbReference>
<dbReference type="SMR" id="Q8V2M9"/>
<dbReference type="KEGG" id="vg:932518"/>
<dbReference type="Proteomes" id="UP000152221">
    <property type="component" value="Genome"/>
</dbReference>
<dbReference type="GO" id="GO:0044423">
    <property type="term" value="C:virion component"/>
    <property type="evidence" value="ECO:0007669"/>
    <property type="project" value="UniProtKB-KW"/>
</dbReference>
<dbReference type="GO" id="GO:0003682">
    <property type="term" value="F:chromatin binding"/>
    <property type="evidence" value="ECO:0007669"/>
    <property type="project" value="TreeGrafter"/>
</dbReference>
<dbReference type="GO" id="GO:0016032">
    <property type="term" value="P:viral process"/>
    <property type="evidence" value="ECO:0007669"/>
    <property type="project" value="InterPro"/>
</dbReference>
<dbReference type="Gene3D" id="1.10.287.1490">
    <property type="match status" value="1"/>
</dbReference>
<dbReference type="InterPro" id="IPR007596">
    <property type="entry name" value="Pox_A_type_inc"/>
</dbReference>
<dbReference type="PANTHER" id="PTHR43941">
    <property type="entry name" value="STRUCTURAL MAINTENANCE OF CHROMOSOMES PROTEIN 2"/>
    <property type="match status" value="1"/>
</dbReference>
<dbReference type="PANTHER" id="PTHR43941:SF1">
    <property type="entry name" value="STRUCTURAL MAINTENANCE OF CHROMOSOMES PROTEIN 2"/>
    <property type="match status" value="1"/>
</dbReference>
<dbReference type="Pfam" id="PF04508">
    <property type="entry name" value="Pox_A_type_inc"/>
    <property type="match status" value="4"/>
</dbReference>
<sequence length="726" mass="84285">MELTNLIEKCTKHSKDFATEVEKLWNDELSSESGLSRKTRNVIRNILRDITKSLTTDKKSKCFCILERSTINGEQIKDVYKTIFNNGVDVESRINTTGKYVLFTVMTYAAAELRLIKSDEIFALLSRFFNMICDIHRKYGCGNMFVGIPAALIVLLEIDHINKLFSVFSTRYDAKAYLYTEYFLFLNINHYLLSGSDLFINVAYGAVSFSSPISVPDYIMEALTFKACDHIMKSGDLIYIYAFTKKVKDLFNTKSDSIYQYVRLHEMSYDGVSEDTDDDDEVFAILNLSIDSSVDRYRNRVLLLTPEVASLRKEYSEAEPDYKYLMDEEVSAYDKHLPKPITNTGIEEPHATGGDKEDQPIKVVYPPNNDKDDAIKPHNPLEDPNYVPTITRTDIGIADYQLVINKLIEWLDKCEEECGNGGEFKTELEEAKRKLTELNAELSDKLSKIMSLERDSVNKTERIDRLTKEIKELRDIQNGTDDGSDSSEIDKKIIRELRESLDREREMRSKLEKELDTIRDGKVDGSCQRELELRRMWLKQRDDDLRAEIDKRRNVEWELSRLRRDIKECDKYKEDLDKAKATISNYVSRISTLESEIAKYQQDRDTLSVVRRELEEERRRVKDLESRLDECTRNQEDTQEVDALRSRIRELENKLTDCIESGGGNLTEISRLQSRISDLERQLNECRGNVTEISRLESRISDLERQLNDCRRNNETNAETERDATS</sequence>
<reference key="1">
    <citation type="journal article" date="2002" name="Virology">
        <title>The genome of camelpox virus.</title>
        <authorList>
            <person name="Afonso C.L."/>
            <person name="Tulman E.R."/>
            <person name="Lu Z."/>
            <person name="Zsak L."/>
            <person name="Sandybaev N.T."/>
            <person name="Kerembekova U.Z."/>
            <person name="Zaitsev V.L."/>
            <person name="Kutish G.F."/>
            <person name="Rock D.L."/>
        </authorList>
    </citation>
    <scope>NUCLEOTIDE SEQUENCE [LARGE SCALE GENOMIC DNA]</scope>
</reference>
<organism>
    <name type="scientific">Camelpox virus (strain M-96)</name>
    <dbReference type="NCBI Taxonomy" id="203173"/>
    <lineage>
        <taxon>Viruses</taxon>
        <taxon>Varidnaviria</taxon>
        <taxon>Bamfordvirae</taxon>
        <taxon>Nucleocytoviricota</taxon>
        <taxon>Pokkesviricetes</taxon>
        <taxon>Chitovirales</taxon>
        <taxon>Poxviridae</taxon>
        <taxon>Chordopoxvirinae</taxon>
        <taxon>Orthopoxvirus</taxon>
        <taxon>Camelpox virus</taxon>
    </lineage>
</organism>